<comment type="function">
    <text evidence="1">DNA-dependent RNA polymerase catalyzes the transcription of DNA into RNA using the four ribonucleoside triphosphates as substrates.</text>
</comment>
<comment type="catalytic activity">
    <reaction evidence="1">
        <text>RNA(n) + a ribonucleoside 5'-triphosphate = RNA(n+1) + diphosphate</text>
        <dbReference type="Rhea" id="RHEA:21248"/>
        <dbReference type="Rhea" id="RHEA-COMP:14527"/>
        <dbReference type="Rhea" id="RHEA-COMP:17342"/>
        <dbReference type="ChEBI" id="CHEBI:33019"/>
        <dbReference type="ChEBI" id="CHEBI:61557"/>
        <dbReference type="ChEBI" id="CHEBI:140395"/>
        <dbReference type="EC" id="2.7.7.6"/>
    </reaction>
</comment>
<comment type="subunit">
    <text evidence="1">In plastids the minimal PEP RNA polymerase catalytic core is composed of four subunits: alpha, beta, beta', and beta''. When a (nuclear-encoded) sigma factor is associated with the core the holoenzyme is formed, which can initiate transcription.</text>
</comment>
<comment type="subcellular location">
    <subcellularLocation>
        <location>Plastid</location>
        <location>Chloroplast</location>
    </subcellularLocation>
</comment>
<comment type="domain">
    <text evidence="1">The N-terminal domain is essential for RNAP assembly and basal transcription, whereas the C-terminal domain is involved in interaction with transcriptional regulators and with upstream promoter elements.</text>
</comment>
<comment type="similarity">
    <text evidence="1">Belongs to the RNA polymerase alpha chain family.</text>
</comment>
<comment type="sequence caution" evidence="2">
    <conflict type="erroneous initiation">
        <sequence resource="EMBL-CDS" id="ABD47177"/>
    </conflict>
</comment>
<accession>Q1KXS7</accession>
<proteinExistence type="inferred from homology"/>
<reference key="1">
    <citation type="submission" date="2006-01" db="EMBL/GenBank/DDBJ databases">
        <title>A comparison of the first two published chloroplast genomes in Asteraceae: Lactuca and Helianthus.</title>
        <authorList>
            <person name="Timme R.E."/>
            <person name="Kuehl J.V."/>
            <person name="Boore J.L."/>
            <person name="Jansen R.K."/>
        </authorList>
    </citation>
    <scope>NUCLEOTIDE SEQUENCE [LARGE SCALE GENOMIC DNA]</scope>
    <source>
        <strain>cv. HA383</strain>
    </source>
</reference>
<protein>
    <recommendedName>
        <fullName evidence="1">DNA-directed RNA polymerase subunit alpha</fullName>
        <shortName evidence="1">PEP</shortName>
        <ecNumber evidence="1">2.7.7.6</ecNumber>
    </recommendedName>
    <alternativeName>
        <fullName evidence="1">Plastid-encoded RNA polymerase subunit alpha</fullName>
        <shortName evidence="1">RNA polymerase subunit alpha</shortName>
    </alternativeName>
</protein>
<feature type="chain" id="PRO_0000275689" description="DNA-directed RNA polymerase subunit alpha">
    <location>
        <begin position="1"/>
        <end position="335"/>
    </location>
</feature>
<feature type="region of interest" description="Alpha N-terminal domain (alpha-NTD)" evidence="1">
    <location>
        <begin position="1"/>
        <end position="231"/>
    </location>
</feature>
<feature type="region of interest" description="Alpha C-terminal domain (alpha-CTD)" evidence="1">
    <location>
        <begin position="263"/>
        <end position="335"/>
    </location>
</feature>
<evidence type="ECO:0000255" key="1">
    <source>
        <dbReference type="HAMAP-Rule" id="MF_00059"/>
    </source>
</evidence>
<evidence type="ECO:0000305" key="2"/>
<gene>
    <name evidence="1" type="primary">rpoA</name>
</gene>
<sequence>MVREKITVSTRTLQWKCVESAADSKRLLYGRFILSPLMKGQADTIGIAMRRALLGEIEGTCITRAKSEKISHEYATIMGIQESVHEILMNLKEIVLRSNLYGTCEASICVRGPGYVTAQDIILPPYVEIVDNTQHIASLTEPIELVIGLQIEKNRGYLIKAPNTFQDGSYPIDPVFMPVRNANHSIHSYENGNKEILFLEIWTNGSLTPKEALHEASRNLIDLLIPFLHTKEENLSLEDNQHIVPLPPFTFYDKLAKLTKNKKKMALKSIFIDQSELPPRIYNCLKRSNIYTLLDLLNNSQEDLMKMEHFRIEDVKQILGILEKNFVIDLPKNKF</sequence>
<name>RPOA_HELAN</name>
<geneLocation type="chloroplast"/>
<keyword id="KW-0150">Chloroplast</keyword>
<keyword id="KW-0240">DNA-directed RNA polymerase</keyword>
<keyword id="KW-0548">Nucleotidyltransferase</keyword>
<keyword id="KW-0934">Plastid</keyword>
<keyword id="KW-0804">Transcription</keyword>
<keyword id="KW-0808">Transferase</keyword>
<dbReference type="EC" id="2.7.7.6" evidence="1"/>
<dbReference type="EMBL" id="DQ383815">
    <property type="protein sequence ID" value="ABD47177.1"/>
    <property type="status" value="ALT_INIT"/>
    <property type="molecule type" value="Genomic_DNA"/>
</dbReference>
<dbReference type="RefSeq" id="YP_588149.2">
    <property type="nucleotide sequence ID" value="NC_007977.1"/>
</dbReference>
<dbReference type="SMR" id="Q1KXS7"/>
<dbReference type="GeneID" id="4055691"/>
<dbReference type="KEGG" id="han:4055691"/>
<dbReference type="OMA" id="CVESRED"/>
<dbReference type="OrthoDB" id="360088at2759"/>
<dbReference type="GO" id="GO:0009507">
    <property type="term" value="C:chloroplast"/>
    <property type="evidence" value="ECO:0007669"/>
    <property type="project" value="UniProtKB-SubCell"/>
</dbReference>
<dbReference type="GO" id="GO:0000428">
    <property type="term" value="C:DNA-directed RNA polymerase complex"/>
    <property type="evidence" value="ECO:0007669"/>
    <property type="project" value="UniProtKB-KW"/>
</dbReference>
<dbReference type="GO" id="GO:0005739">
    <property type="term" value="C:mitochondrion"/>
    <property type="evidence" value="ECO:0007669"/>
    <property type="project" value="GOC"/>
</dbReference>
<dbReference type="GO" id="GO:0003677">
    <property type="term" value="F:DNA binding"/>
    <property type="evidence" value="ECO:0007669"/>
    <property type="project" value="UniProtKB-UniRule"/>
</dbReference>
<dbReference type="GO" id="GO:0003899">
    <property type="term" value="F:DNA-directed RNA polymerase activity"/>
    <property type="evidence" value="ECO:0007669"/>
    <property type="project" value="UniProtKB-UniRule"/>
</dbReference>
<dbReference type="GO" id="GO:0046983">
    <property type="term" value="F:protein dimerization activity"/>
    <property type="evidence" value="ECO:0007669"/>
    <property type="project" value="InterPro"/>
</dbReference>
<dbReference type="GO" id="GO:0006351">
    <property type="term" value="P:DNA-templated transcription"/>
    <property type="evidence" value="ECO:0007669"/>
    <property type="project" value="UniProtKB-UniRule"/>
</dbReference>
<dbReference type="CDD" id="cd06928">
    <property type="entry name" value="RNAP_alpha_NTD"/>
    <property type="match status" value="1"/>
</dbReference>
<dbReference type="FunFam" id="1.10.150.20:FF:000021">
    <property type="entry name" value="DNA-directed RNA polymerase subunit alpha"/>
    <property type="match status" value="1"/>
</dbReference>
<dbReference type="FunFam" id="2.170.120.12:FF:000001">
    <property type="entry name" value="DNA-directed RNA polymerase subunit alpha"/>
    <property type="match status" value="1"/>
</dbReference>
<dbReference type="FunFam" id="3.30.1360.10:FF:000039">
    <property type="entry name" value="DNA-directed RNA polymerase subunit alpha"/>
    <property type="match status" value="1"/>
</dbReference>
<dbReference type="Gene3D" id="1.10.150.20">
    <property type="entry name" value="5' to 3' exonuclease, C-terminal subdomain"/>
    <property type="match status" value="1"/>
</dbReference>
<dbReference type="Gene3D" id="2.170.120.12">
    <property type="entry name" value="DNA-directed RNA polymerase, insert domain"/>
    <property type="match status" value="1"/>
</dbReference>
<dbReference type="Gene3D" id="3.30.1360.10">
    <property type="entry name" value="RNA polymerase, RBP11-like subunit"/>
    <property type="match status" value="1"/>
</dbReference>
<dbReference type="HAMAP" id="MF_00059">
    <property type="entry name" value="RNApol_bact_RpoA"/>
    <property type="match status" value="1"/>
</dbReference>
<dbReference type="InterPro" id="IPR011262">
    <property type="entry name" value="DNA-dir_RNA_pol_insert"/>
</dbReference>
<dbReference type="InterPro" id="IPR011263">
    <property type="entry name" value="DNA-dir_RNA_pol_RpoA/D/Rpb3"/>
</dbReference>
<dbReference type="InterPro" id="IPR011773">
    <property type="entry name" value="DNA-dir_RpoA"/>
</dbReference>
<dbReference type="InterPro" id="IPR036603">
    <property type="entry name" value="RBP11-like"/>
</dbReference>
<dbReference type="InterPro" id="IPR011260">
    <property type="entry name" value="RNAP_asu_C"/>
</dbReference>
<dbReference type="InterPro" id="IPR036643">
    <property type="entry name" value="RNApol_insert_sf"/>
</dbReference>
<dbReference type="NCBIfam" id="TIGR02027">
    <property type="entry name" value="rpoA"/>
    <property type="match status" value="1"/>
</dbReference>
<dbReference type="Pfam" id="PF01000">
    <property type="entry name" value="RNA_pol_A_bac"/>
    <property type="match status" value="1"/>
</dbReference>
<dbReference type="Pfam" id="PF03118">
    <property type="entry name" value="RNA_pol_A_CTD"/>
    <property type="match status" value="1"/>
</dbReference>
<dbReference type="Pfam" id="PF01193">
    <property type="entry name" value="RNA_pol_L"/>
    <property type="match status" value="1"/>
</dbReference>
<dbReference type="SMART" id="SM00662">
    <property type="entry name" value="RPOLD"/>
    <property type="match status" value="1"/>
</dbReference>
<dbReference type="SUPFAM" id="SSF47789">
    <property type="entry name" value="C-terminal domain of RNA polymerase alpha subunit"/>
    <property type="match status" value="1"/>
</dbReference>
<dbReference type="SUPFAM" id="SSF56553">
    <property type="entry name" value="Insert subdomain of RNA polymerase alpha subunit"/>
    <property type="match status" value="1"/>
</dbReference>
<dbReference type="SUPFAM" id="SSF55257">
    <property type="entry name" value="RBP11-like subunits of RNA polymerase"/>
    <property type="match status" value="1"/>
</dbReference>
<organism>
    <name type="scientific">Helianthus annuus</name>
    <name type="common">Common sunflower</name>
    <dbReference type="NCBI Taxonomy" id="4232"/>
    <lineage>
        <taxon>Eukaryota</taxon>
        <taxon>Viridiplantae</taxon>
        <taxon>Streptophyta</taxon>
        <taxon>Embryophyta</taxon>
        <taxon>Tracheophyta</taxon>
        <taxon>Spermatophyta</taxon>
        <taxon>Magnoliopsida</taxon>
        <taxon>eudicotyledons</taxon>
        <taxon>Gunneridae</taxon>
        <taxon>Pentapetalae</taxon>
        <taxon>asterids</taxon>
        <taxon>campanulids</taxon>
        <taxon>Asterales</taxon>
        <taxon>Asteraceae</taxon>
        <taxon>Asteroideae</taxon>
        <taxon>Heliantheae alliance</taxon>
        <taxon>Heliantheae</taxon>
        <taxon>Helianthus</taxon>
    </lineage>
</organism>